<sequence>MAIDGEKKKDPRAWDALTPSLAEWILDAIKSMGFEKMTPVQASTIPLFMGNKDVVVEAVTGSGKTLSFLIPVVEKLLRLEEPIKKHHVGAIIVSPTRELATQIHSVLTSLLAFHEPSAGALKPLEEGEKRKPSSTLRVVSQLLLGGTTTPAQDLSRFLKNSPNLLISTPGRLLELLSSPHVHCPQSSFEVLVLDEADRLLDLGFKDDLQKILSRLPKQRRTGLFSASVSEAVGEIVRVGLRNPVKIAVKVKGAGGDKMTPASLQMSYLLTPPTHKFPALLSLLSQLQPTPQKSIIYLSTCAAVDYFQPLLEAVLPKQFALVSLHGKHPPNVRQRNFSKYVAAVSPTILLTTDVAARGLDIPQVDLVVQIDPPSDPKVFLHRCGRAGRAGRKGLSVIFLQPGREEDYIPFLEIRKTPITLFKRPEISTTDDAAKILISKMRKEVLADRALYDKGQRAFVSWVQAYSKHQASSIFRVADLDWTDLGNAWALVRLPKMPELKKWEGDKTLGIKLDMSEYAYKDKVREKARRVAMEEAKNAGPYVPTEEQIARKKQREAWSQKHEKQDLKELKREKKKRKREIERLDKMTDEEKRVEQEKERELQALIEQVKRRKIEDDADEEFEGFAD</sequence>
<dbReference type="EC" id="3.6.4.13" evidence="1"/>
<dbReference type="EMBL" id="CH476639">
    <property type="protein sequence ID" value="EDN96015.1"/>
    <property type="molecule type" value="Genomic_DNA"/>
</dbReference>
<dbReference type="RefSeq" id="XP_001587191.1">
    <property type="nucleotide sequence ID" value="XM_001587141.1"/>
</dbReference>
<dbReference type="SMR" id="A7F2S3"/>
<dbReference type="FunCoup" id="A7F2S3">
    <property type="interactions" value="1106"/>
</dbReference>
<dbReference type="STRING" id="665079.A7F2S3"/>
<dbReference type="EnsemblFungi" id="EDN96015">
    <property type="protein sequence ID" value="EDN96015"/>
    <property type="gene ID" value="SS1G_12221"/>
</dbReference>
<dbReference type="GeneID" id="5483428"/>
<dbReference type="KEGG" id="ssl:SS1G_12221"/>
<dbReference type="VEuPathDB" id="FungiDB:sscle_05g041900"/>
<dbReference type="eggNOG" id="KOG0345">
    <property type="taxonomic scope" value="Eukaryota"/>
</dbReference>
<dbReference type="HOGENOM" id="CLU_003041_26_4_1"/>
<dbReference type="InParanoid" id="A7F2S3"/>
<dbReference type="OMA" id="AYKEHEC"/>
<dbReference type="OrthoDB" id="7396459at2759"/>
<dbReference type="Proteomes" id="UP000001312">
    <property type="component" value="Unassembled WGS sequence"/>
</dbReference>
<dbReference type="GO" id="GO:0030686">
    <property type="term" value="C:90S preribosome"/>
    <property type="evidence" value="ECO:0007669"/>
    <property type="project" value="EnsemblFungi"/>
</dbReference>
<dbReference type="GO" id="GO:0005730">
    <property type="term" value="C:nucleolus"/>
    <property type="evidence" value="ECO:0000318"/>
    <property type="project" value="GO_Central"/>
</dbReference>
<dbReference type="GO" id="GO:0005654">
    <property type="term" value="C:nucleoplasm"/>
    <property type="evidence" value="ECO:0007669"/>
    <property type="project" value="EnsemblFungi"/>
</dbReference>
<dbReference type="GO" id="GO:0030687">
    <property type="term" value="C:preribosome, large subunit precursor"/>
    <property type="evidence" value="ECO:0007669"/>
    <property type="project" value="EnsemblFungi"/>
</dbReference>
<dbReference type="GO" id="GO:0005524">
    <property type="term" value="F:ATP binding"/>
    <property type="evidence" value="ECO:0007669"/>
    <property type="project" value="UniProtKB-KW"/>
</dbReference>
<dbReference type="GO" id="GO:0016887">
    <property type="term" value="F:ATP hydrolysis activity"/>
    <property type="evidence" value="ECO:0007669"/>
    <property type="project" value="RHEA"/>
</dbReference>
<dbReference type="GO" id="GO:0003723">
    <property type="term" value="F:RNA binding"/>
    <property type="evidence" value="ECO:0007669"/>
    <property type="project" value="UniProtKB-KW"/>
</dbReference>
<dbReference type="GO" id="GO:0003724">
    <property type="term" value="F:RNA helicase activity"/>
    <property type="evidence" value="ECO:0007669"/>
    <property type="project" value="UniProtKB-EC"/>
</dbReference>
<dbReference type="GO" id="GO:1902626">
    <property type="term" value="P:assembly of large subunit precursor of preribosome"/>
    <property type="evidence" value="ECO:0007669"/>
    <property type="project" value="EnsemblFungi"/>
</dbReference>
<dbReference type="GO" id="GO:0000470">
    <property type="term" value="P:maturation of LSU-rRNA"/>
    <property type="evidence" value="ECO:0007669"/>
    <property type="project" value="EnsemblFungi"/>
</dbReference>
<dbReference type="CDD" id="cd17960">
    <property type="entry name" value="DEADc_DDX55"/>
    <property type="match status" value="1"/>
</dbReference>
<dbReference type="CDD" id="cd18787">
    <property type="entry name" value="SF2_C_DEAD"/>
    <property type="match status" value="1"/>
</dbReference>
<dbReference type="Gene3D" id="3.40.50.300">
    <property type="entry name" value="P-loop containing nucleotide triphosphate hydrolases"/>
    <property type="match status" value="2"/>
</dbReference>
<dbReference type="InterPro" id="IPR056330">
    <property type="entry name" value="CTT_SPB4"/>
</dbReference>
<dbReference type="InterPro" id="IPR011545">
    <property type="entry name" value="DEAD/DEAH_box_helicase_dom"/>
</dbReference>
<dbReference type="InterPro" id="IPR014001">
    <property type="entry name" value="Helicase_ATP-bd"/>
</dbReference>
<dbReference type="InterPro" id="IPR001650">
    <property type="entry name" value="Helicase_C-like"/>
</dbReference>
<dbReference type="InterPro" id="IPR027417">
    <property type="entry name" value="P-loop_NTPase"/>
</dbReference>
<dbReference type="InterPro" id="IPR000629">
    <property type="entry name" value="RNA-helicase_DEAD-box_CS"/>
</dbReference>
<dbReference type="InterPro" id="IPR014014">
    <property type="entry name" value="RNA_helicase_DEAD_Q_motif"/>
</dbReference>
<dbReference type="InterPro" id="IPR025313">
    <property type="entry name" value="SPB4-like_CTE"/>
</dbReference>
<dbReference type="PANTHER" id="PTHR24031">
    <property type="entry name" value="RNA HELICASE"/>
    <property type="match status" value="1"/>
</dbReference>
<dbReference type="Pfam" id="PF13959">
    <property type="entry name" value="CTE_SPB4"/>
    <property type="match status" value="1"/>
</dbReference>
<dbReference type="Pfam" id="PF23681">
    <property type="entry name" value="CTT_SPB4"/>
    <property type="match status" value="1"/>
</dbReference>
<dbReference type="Pfam" id="PF00270">
    <property type="entry name" value="DEAD"/>
    <property type="match status" value="1"/>
</dbReference>
<dbReference type="Pfam" id="PF00271">
    <property type="entry name" value="Helicase_C"/>
    <property type="match status" value="1"/>
</dbReference>
<dbReference type="SMART" id="SM00487">
    <property type="entry name" value="DEXDc"/>
    <property type="match status" value="1"/>
</dbReference>
<dbReference type="SMART" id="SM01178">
    <property type="entry name" value="DUF4217"/>
    <property type="match status" value="1"/>
</dbReference>
<dbReference type="SMART" id="SM00490">
    <property type="entry name" value="HELICc"/>
    <property type="match status" value="1"/>
</dbReference>
<dbReference type="SUPFAM" id="SSF52540">
    <property type="entry name" value="P-loop containing nucleoside triphosphate hydrolases"/>
    <property type="match status" value="2"/>
</dbReference>
<dbReference type="PROSITE" id="PS00039">
    <property type="entry name" value="DEAD_ATP_HELICASE"/>
    <property type="match status" value="1"/>
</dbReference>
<dbReference type="PROSITE" id="PS51192">
    <property type="entry name" value="HELICASE_ATP_BIND_1"/>
    <property type="match status" value="1"/>
</dbReference>
<dbReference type="PROSITE" id="PS51194">
    <property type="entry name" value="HELICASE_CTER"/>
    <property type="match status" value="1"/>
</dbReference>
<dbReference type="PROSITE" id="PS51195">
    <property type="entry name" value="Q_MOTIF"/>
    <property type="match status" value="1"/>
</dbReference>
<organism>
    <name type="scientific">Sclerotinia sclerotiorum (strain ATCC 18683 / 1980 / Ss-1)</name>
    <name type="common">White mold</name>
    <name type="synonym">Whetzelinia sclerotiorum</name>
    <dbReference type="NCBI Taxonomy" id="665079"/>
    <lineage>
        <taxon>Eukaryota</taxon>
        <taxon>Fungi</taxon>
        <taxon>Dikarya</taxon>
        <taxon>Ascomycota</taxon>
        <taxon>Pezizomycotina</taxon>
        <taxon>Leotiomycetes</taxon>
        <taxon>Helotiales</taxon>
        <taxon>Sclerotiniaceae</taxon>
        <taxon>Sclerotinia</taxon>
    </lineage>
</organism>
<evidence type="ECO:0000250" key="1">
    <source>
        <dbReference type="UniProtKB" id="P25808"/>
    </source>
</evidence>
<evidence type="ECO:0000255" key="2"/>
<evidence type="ECO:0000255" key="3">
    <source>
        <dbReference type="PROSITE-ProRule" id="PRU00541"/>
    </source>
</evidence>
<evidence type="ECO:0000255" key="4">
    <source>
        <dbReference type="PROSITE-ProRule" id="PRU00542"/>
    </source>
</evidence>
<evidence type="ECO:0000256" key="5">
    <source>
        <dbReference type="SAM" id="MobiDB-lite"/>
    </source>
</evidence>
<evidence type="ECO:0000305" key="6"/>
<reference key="1">
    <citation type="journal article" date="2011" name="PLoS Genet.">
        <title>Genomic analysis of the necrotrophic fungal pathogens Sclerotinia sclerotiorum and Botrytis cinerea.</title>
        <authorList>
            <person name="Amselem J."/>
            <person name="Cuomo C.A."/>
            <person name="van Kan J.A.L."/>
            <person name="Viaud M."/>
            <person name="Benito E.P."/>
            <person name="Couloux A."/>
            <person name="Coutinho P.M."/>
            <person name="de Vries R.P."/>
            <person name="Dyer P.S."/>
            <person name="Fillinger S."/>
            <person name="Fournier E."/>
            <person name="Gout L."/>
            <person name="Hahn M."/>
            <person name="Kohn L."/>
            <person name="Lapalu N."/>
            <person name="Plummer K.M."/>
            <person name="Pradier J.-M."/>
            <person name="Quevillon E."/>
            <person name="Sharon A."/>
            <person name="Simon A."/>
            <person name="ten Have A."/>
            <person name="Tudzynski B."/>
            <person name="Tudzynski P."/>
            <person name="Wincker P."/>
            <person name="Andrew M."/>
            <person name="Anthouard V."/>
            <person name="Beever R.E."/>
            <person name="Beffa R."/>
            <person name="Benoit I."/>
            <person name="Bouzid O."/>
            <person name="Brault B."/>
            <person name="Chen Z."/>
            <person name="Choquer M."/>
            <person name="Collemare J."/>
            <person name="Cotton P."/>
            <person name="Danchin E.G."/>
            <person name="Da Silva C."/>
            <person name="Gautier A."/>
            <person name="Giraud C."/>
            <person name="Giraud T."/>
            <person name="Gonzalez C."/>
            <person name="Grossetete S."/>
            <person name="Gueldener U."/>
            <person name="Henrissat B."/>
            <person name="Howlett B.J."/>
            <person name="Kodira C."/>
            <person name="Kretschmer M."/>
            <person name="Lappartient A."/>
            <person name="Leroch M."/>
            <person name="Levis C."/>
            <person name="Mauceli E."/>
            <person name="Neuveglise C."/>
            <person name="Oeser B."/>
            <person name="Pearson M."/>
            <person name="Poulain J."/>
            <person name="Poussereau N."/>
            <person name="Quesneville H."/>
            <person name="Rascle C."/>
            <person name="Schumacher J."/>
            <person name="Segurens B."/>
            <person name="Sexton A."/>
            <person name="Silva E."/>
            <person name="Sirven C."/>
            <person name="Soanes D.M."/>
            <person name="Talbot N.J."/>
            <person name="Templeton M."/>
            <person name="Yandava C."/>
            <person name="Yarden O."/>
            <person name="Zeng Q."/>
            <person name="Rollins J.A."/>
            <person name="Lebrun M.-H."/>
            <person name="Dickman M."/>
        </authorList>
    </citation>
    <scope>NUCLEOTIDE SEQUENCE [LARGE SCALE GENOMIC DNA]</scope>
    <source>
        <strain>ATCC 18683 / 1980 / Ss-1</strain>
    </source>
</reference>
<protein>
    <recommendedName>
        <fullName evidence="6">ATP-dependent rRNA helicase spb4</fullName>
        <ecNumber evidence="1">3.6.4.13</ecNumber>
    </recommendedName>
</protein>
<comment type="function">
    <text evidence="1">ATP-binding RNA helicase involved in the biogenesis of 60S ribosomal subunits. Binds 90S pre-ribosomal particles and dissociates from pre-60S ribosomal particles after processing of 27SB pre-rRNA. Required for the normal formation of 18S rRNA through the processing of pre-rRNAs at sites A0, A1 and A2, and the normal formation of 25S and 5.8S rRNAs through the processing of pre-rRNAs at sites C1 and C2.</text>
</comment>
<comment type="catalytic activity">
    <reaction evidence="1">
        <text>ATP + H2O = ADP + phosphate + H(+)</text>
        <dbReference type="Rhea" id="RHEA:13065"/>
        <dbReference type="ChEBI" id="CHEBI:15377"/>
        <dbReference type="ChEBI" id="CHEBI:15378"/>
        <dbReference type="ChEBI" id="CHEBI:30616"/>
        <dbReference type="ChEBI" id="CHEBI:43474"/>
        <dbReference type="ChEBI" id="CHEBI:456216"/>
        <dbReference type="EC" id="3.6.4.13"/>
    </reaction>
</comment>
<comment type="subunit">
    <text evidence="1">Component of pre-60S ribosomal complexes.</text>
</comment>
<comment type="subcellular location">
    <subcellularLocation>
        <location evidence="1">Nucleus</location>
        <location evidence="1">Nucleolus</location>
    </subcellularLocation>
</comment>
<comment type="domain">
    <text>The Q motif is unique to and characteristic of the DEAD box family of RNA helicases and controls ATP binding and hydrolysis.</text>
</comment>
<comment type="similarity">
    <text evidence="6">Belongs to the DEAD box helicase family. DDX55/SPB4 subfamily.</text>
</comment>
<keyword id="KW-0067">ATP-binding</keyword>
<keyword id="KW-0175">Coiled coil</keyword>
<keyword id="KW-0347">Helicase</keyword>
<keyword id="KW-0378">Hydrolase</keyword>
<keyword id="KW-0547">Nucleotide-binding</keyword>
<keyword id="KW-0539">Nucleus</keyword>
<keyword id="KW-1185">Reference proteome</keyword>
<keyword id="KW-0690">Ribosome biogenesis</keyword>
<keyword id="KW-0694">RNA-binding</keyword>
<keyword id="KW-0698">rRNA processing</keyword>
<accession>A7F2S3</accession>
<gene>
    <name evidence="1" type="primary">spb4</name>
    <name type="ORF">SS1G_12221</name>
</gene>
<proteinExistence type="inferred from homology"/>
<feature type="chain" id="PRO_0000310251" description="ATP-dependent rRNA helicase spb4">
    <location>
        <begin position="1"/>
        <end position="625"/>
    </location>
</feature>
<feature type="domain" description="Helicase ATP-binding" evidence="3">
    <location>
        <begin position="45"/>
        <end position="246"/>
    </location>
</feature>
<feature type="domain" description="Helicase C-terminal" evidence="4">
    <location>
        <begin position="278"/>
        <end position="436"/>
    </location>
</feature>
<feature type="region of interest" description="Disordered" evidence="5">
    <location>
        <begin position="550"/>
        <end position="597"/>
    </location>
</feature>
<feature type="coiled-coil region" evidence="2">
    <location>
        <begin position="557"/>
        <end position="614"/>
    </location>
</feature>
<feature type="short sequence motif" description="Q motif" evidence="6">
    <location>
        <begin position="14"/>
        <end position="42"/>
    </location>
</feature>
<feature type="short sequence motif" description="DEAD box" evidence="6">
    <location>
        <begin position="194"/>
        <end position="197"/>
    </location>
</feature>
<feature type="compositionally biased region" description="Basic and acidic residues" evidence="5">
    <location>
        <begin position="553"/>
        <end position="570"/>
    </location>
</feature>
<feature type="compositionally biased region" description="Basic and acidic residues" evidence="5">
    <location>
        <begin position="577"/>
        <end position="597"/>
    </location>
</feature>
<feature type="binding site" evidence="3">
    <location>
        <begin position="58"/>
        <end position="65"/>
    </location>
    <ligand>
        <name>ATP</name>
        <dbReference type="ChEBI" id="CHEBI:30616"/>
    </ligand>
</feature>
<name>SPB4_SCLS1</name>